<evidence type="ECO:0000250" key="1">
    <source>
        <dbReference type="UniProtKB" id="P11411"/>
    </source>
</evidence>
<evidence type="ECO:0000250" key="2">
    <source>
        <dbReference type="UniProtKB" id="P11413"/>
    </source>
</evidence>
<evidence type="ECO:0000305" key="3"/>
<dbReference type="EC" id="1.1.1.49" evidence="2"/>
<dbReference type="EMBL" id="M19637">
    <property type="protein sequence ID" value="AAA30971.1"/>
    <property type="molecule type" value="Genomic_DNA"/>
</dbReference>
<dbReference type="EMBL" id="M19636">
    <property type="protein sequence ID" value="AAA30971.1"/>
    <property type="status" value="JOINED"/>
    <property type="molecule type" value="Genomic_DNA"/>
</dbReference>
<dbReference type="EMBL" id="M19642">
    <property type="protein sequence ID" value="AAA30972.1"/>
    <property type="status" value="ALT_SEQ"/>
    <property type="molecule type" value="Genomic_DNA"/>
</dbReference>
<dbReference type="EMBL" id="M19638">
    <property type="protein sequence ID" value="AAA30973.1"/>
    <property type="molecule type" value="Genomic_DNA"/>
</dbReference>
<dbReference type="EMBL" id="M19639">
    <property type="protein sequence ID" value="AAA30974.1"/>
    <property type="molecule type" value="Genomic_DNA"/>
</dbReference>
<dbReference type="EMBL" id="M19641">
    <property type="protein sequence ID" value="AAA30975.1"/>
    <property type="molecule type" value="Genomic_DNA"/>
</dbReference>
<dbReference type="EMBL" id="M19640">
    <property type="protein sequence ID" value="AAA30975.1"/>
    <property type="status" value="JOINED"/>
    <property type="molecule type" value="Genomic_DNA"/>
</dbReference>
<dbReference type="UniPathway" id="UPA00115">
    <property type="reaction ID" value="UER00408"/>
</dbReference>
<dbReference type="GO" id="GO:0005829">
    <property type="term" value="C:cytosol"/>
    <property type="evidence" value="ECO:0007669"/>
    <property type="project" value="UniProtKB-SubCell"/>
</dbReference>
<dbReference type="GO" id="GO:0016020">
    <property type="term" value="C:membrane"/>
    <property type="evidence" value="ECO:0007669"/>
    <property type="project" value="UniProtKB-SubCell"/>
</dbReference>
<dbReference type="GO" id="GO:0004345">
    <property type="term" value="F:glucose-6-phosphate dehydrogenase activity"/>
    <property type="evidence" value="ECO:0000250"/>
    <property type="project" value="UniProtKB"/>
</dbReference>
<dbReference type="GO" id="GO:0050661">
    <property type="term" value="F:NADP binding"/>
    <property type="evidence" value="ECO:0007669"/>
    <property type="project" value="InterPro"/>
</dbReference>
<dbReference type="GO" id="GO:0051156">
    <property type="term" value="P:glucose 6-phosphate metabolic process"/>
    <property type="evidence" value="ECO:0000250"/>
    <property type="project" value="UniProtKB"/>
</dbReference>
<dbReference type="GO" id="GO:0006006">
    <property type="term" value="P:glucose metabolic process"/>
    <property type="evidence" value="ECO:0007669"/>
    <property type="project" value="UniProtKB-KW"/>
</dbReference>
<dbReference type="GO" id="GO:0006739">
    <property type="term" value="P:NADP metabolic process"/>
    <property type="evidence" value="ECO:0000250"/>
    <property type="project" value="UniProtKB"/>
</dbReference>
<dbReference type="GO" id="GO:0009051">
    <property type="term" value="P:pentose-phosphate shunt, oxidative branch"/>
    <property type="evidence" value="ECO:0007669"/>
    <property type="project" value="TreeGrafter"/>
</dbReference>
<dbReference type="Gene3D" id="3.30.360.10">
    <property type="entry name" value="Dihydrodipicolinate Reductase, domain 2"/>
    <property type="match status" value="2"/>
</dbReference>
<dbReference type="Gene3D" id="3.40.50.720">
    <property type="entry name" value="NAD(P)-binding Rossmann-like Domain"/>
    <property type="match status" value="2"/>
</dbReference>
<dbReference type="InterPro" id="IPR001282">
    <property type="entry name" value="G6P_DH"/>
</dbReference>
<dbReference type="InterPro" id="IPR022675">
    <property type="entry name" value="G6P_DH_C"/>
</dbReference>
<dbReference type="InterPro" id="IPR022674">
    <property type="entry name" value="G6P_DH_NAD-bd"/>
</dbReference>
<dbReference type="InterPro" id="IPR036291">
    <property type="entry name" value="NAD(P)-bd_dom_sf"/>
</dbReference>
<dbReference type="PANTHER" id="PTHR23429:SF0">
    <property type="entry name" value="GLUCOSE-6-PHOSPHATE 1-DEHYDROGENASE"/>
    <property type="match status" value="1"/>
</dbReference>
<dbReference type="PANTHER" id="PTHR23429">
    <property type="entry name" value="GLUCOSE-6-PHOSPHATE 1-DEHYDROGENASE G6PD"/>
    <property type="match status" value="1"/>
</dbReference>
<dbReference type="Pfam" id="PF02781">
    <property type="entry name" value="G6PD_C"/>
    <property type="match status" value="1"/>
</dbReference>
<dbReference type="Pfam" id="PF00479">
    <property type="entry name" value="G6PD_N"/>
    <property type="match status" value="1"/>
</dbReference>
<dbReference type="SUPFAM" id="SSF55347">
    <property type="entry name" value="Glyceraldehyde-3-phosphate dehydrogenase-like, C-terminal domain"/>
    <property type="match status" value="1"/>
</dbReference>
<dbReference type="SUPFAM" id="SSF51735">
    <property type="entry name" value="NAD(P)-binding Rossmann-fold domains"/>
    <property type="match status" value="1"/>
</dbReference>
<protein>
    <recommendedName>
        <fullName>Glucose-6-phosphate 1-dehydrogenase</fullName>
        <shortName>G6PD</shortName>
        <ecNumber evidence="2">1.1.1.49</ecNumber>
    </recommendedName>
</protein>
<feature type="initiator methionine" description="Removed" evidence="2">
    <location>
        <position position="1"/>
    </location>
</feature>
<feature type="chain" id="PRO_0000068082" description="Glucose-6-phosphate 1-dehydrogenase">
    <location>
        <begin position="2"/>
        <end position="191"/>
    </location>
</feature>
<feature type="active site" description="Proton acceptor" evidence="1">
    <location>
        <position position="106"/>
    </location>
</feature>
<feature type="binding site" evidence="2">
    <location>
        <begin position="38"/>
        <end position="45"/>
    </location>
    <ligand>
        <name>NADP(+)</name>
        <dbReference type="ChEBI" id="CHEBI:58349"/>
        <label>1</label>
    </ligand>
</feature>
<feature type="binding site" evidence="2">
    <location>
        <position position="86"/>
    </location>
    <ligand>
        <name>NADP(+)</name>
        <dbReference type="ChEBI" id="CHEBI:58349"/>
        <label>1</label>
    </ligand>
</feature>
<feature type="binding site" evidence="2">
    <location>
        <position position="101"/>
    </location>
    <ligand>
        <name>D-glucose 6-phosphate</name>
        <dbReference type="ChEBI" id="CHEBI:61548"/>
    </ligand>
</feature>
<feature type="binding site" evidence="2">
    <location>
        <position position="163"/>
    </location>
    <ligand>
        <name>NADP(+)</name>
        <dbReference type="ChEBI" id="CHEBI:58349"/>
        <label>2</label>
    </ligand>
</feature>
<feature type="binding site" evidence="2">
    <location>
        <position position="179"/>
    </location>
    <ligand>
        <name>NADP(+)</name>
        <dbReference type="ChEBI" id="CHEBI:58349"/>
        <label>2</label>
    </ligand>
</feature>
<feature type="binding site" evidence="2">
    <location>
        <position position="185"/>
    </location>
    <ligand>
        <name>NADP(+)</name>
        <dbReference type="ChEBI" id="CHEBI:58349"/>
        <label>2</label>
    </ligand>
</feature>
<feature type="modified residue" description="N-acetylalanine" evidence="2">
    <location>
        <position position="2"/>
    </location>
</feature>
<feature type="modified residue" description="Phosphoserine" evidence="2">
    <location>
        <position position="8"/>
    </location>
</feature>
<feature type="modified residue" description="Phosphothreonine" evidence="2">
    <location>
        <position position="10"/>
    </location>
</feature>
<feature type="modified residue" description="N6-acetyllysine" evidence="2">
    <location>
        <position position="173"/>
    </location>
</feature>
<feature type="modified residue" description="Phosphotyrosine" evidence="2">
    <location>
        <position position="179"/>
    </location>
</feature>
<feature type="non-consecutive residues" evidence="3">
    <location>
        <begin position="52"/>
        <end position="53"/>
    </location>
</feature>
<feature type="non-consecutive residues" evidence="3">
    <location>
        <begin position="100"/>
        <end position="101"/>
    </location>
</feature>
<feature type="non-consecutive residues" evidence="3">
    <location>
        <begin position="131"/>
        <end position="132"/>
    </location>
</feature>
<comment type="function">
    <text evidence="2">Cytosolic glucose-6-phosphate dehydrogenase that catalyzes the first and rate-limiting step of the oxidative branch within the pentose phosphate pathway/shunt, an alternative route to glycolysis for the dissimilation of carbohydrates and a major source of reducing power and metabolic intermediates for fatty acid and nucleic acid biosynthetic processes.</text>
</comment>
<comment type="catalytic activity">
    <reaction evidence="2">
        <text>D-glucose 6-phosphate + NADP(+) = 6-phospho-D-glucono-1,5-lactone + NADPH + H(+)</text>
        <dbReference type="Rhea" id="RHEA:15841"/>
        <dbReference type="ChEBI" id="CHEBI:15378"/>
        <dbReference type="ChEBI" id="CHEBI:57783"/>
        <dbReference type="ChEBI" id="CHEBI:57955"/>
        <dbReference type="ChEBI" id="CHEBI:58349"/>
        <dbReference type="ChEBI" id="CHEBI:61548"/>
        <dbReference type="EC" id="1.1.1.49"/>
    </reaction>
    <physiologicalReaction direction="left-to-right" evidence="2">
        <dbReference type="Rhea" id="RHEA:15842"/>
    </physiologicalReaction>
</comment>
<comment type="pathway">
    <text evidence="2">Carbohydrate degradation; pentose phosphate pathway; D-ribulose 5-phosphate from D-glucose 6-phosphate (oxidative stage): step 1/3.</text>
</comment>
<comment type="subunit">
    <text evidence="2">Homotetramer; dimer of dimers. Interacts with SIRT2; the interaction is enhanced by H(2)O(2) treatment (By similarity). Forms a ternary complex with ALDOB and TP53; this interaction is direct. ALDOB stabilizes the complex inhibiting G6PD activity and keeping oxidative pentose phosphate metabolism in check.</text>
</comment>
<comment type="subcellular location">
    <subcellularLocation>
        <location evidence="2">Cytoplasm</location>
        <location evidence="2">Cytosol</location>
    </subcellularLocation>
    <subcellularLocation>
        <location evidence="2">Membrane</location>
        <topology evidence="2">Peripheral membrane protein</topology>
    </subcellularLocation>
</comment>
<comment type="PTM">
    <text evidence="2">Acetylated by ELP3; acetylation inhibits its homodimerization and enzyme activity. Deacetylated by SIRT2; deacetylation stimulates its enzyme activity (By similarity).</text>
</comment>
<comment type="similarity">
    <text evidence="3">Belongs to the glucose-6-phosphate dehydrogenase family.</text>
</comment>
<keyword id="KW-0007">Acetylation</keyword>
<keyword id="KW-0119">Carbohydrate metabolism</keyword>
<keyword id="KW-0963">Cytoplasm</keyword>
<keyword id="KW-0313">Glucose metabolism</keyword>
<keyword id="KW-0472">Membrane</keyword>
<keyword id="KW-0521">NADP</keyword>
<keyword id="KW-0560">Oxidoreductase</keyword>
<keyword id="KW-0597">Phosphoprotein</keyword>
<gene>
    <name type="primary">G6PD</name>
</gene>
<accession>P15588</accession>
<proteinExistence type="inferred from homology"/>
<organism>
    <name type="scientific">Didelphis virginiana</name>
    <name type="common">North American opossum</name>
    <name type="synonym">Didelphis marsupialis virginiana</name>
    <dbReference type="NCBI Taxonomy" id="9267"/>
    <lineage>
        <taxon>Eukaryota</taxon>
        <taxon>Metazoa</taxon>
        <taxon>Chordata</taxon>
        <taxon>Craniata</taxon>
        <taxon>Vertebrata</taxon>
        <taxon>Euteleostomi</taxon>
        <taxon>Mammalia</taxon>
        <taxon>Metatheria</taxon>
        <taxon>Didelphimorphia</taxon>
        <taxon>Didelphidae</taxon>
        <taxon>Didelphis</taxon>
    </lineage>
</organism>
<sequence>MAEQVALSRTQVCGILREELYQGDAFHQSDTHIFIIMGASGDLAKKKIYPTIEPASFQRLNTHMNSLHHGAQANRLFYLALPPIVYEAVTKNIKETCMSQDVMQNHLLQMLCLVAMEKPASTNSDDVRDEKDELQEAWRIFTPLLHHIEREKTQPIPYVYGSRGPPEADELMKRVGFQYEGTYKWVNPHKL</sequence>
<name>G6PD_DIDVI</name>
<reference key="1">
    <citation type="journal article" date="1987" name="Genomics">
        <title>Molecular studies of marsupial X chromosomes reveal limited sequence homology of mammalian X-linked genes.</title>
        <authorList>
            <person name="Kaslow D.C."/>
            <person name="Migeon B.R."/>
            <person name="Persico M.G."/>
            <person name="Zollo M."/>
            <person name="Vandeberg J.L."/>
            <person name="Samollow P.B."/>
        </authorList>
    </citation>
    <scope>NUCLEOTIDE SEQUENCE [GENOMIC DNA]</scope>
</reference>